<keyword id="KW-0997">Cell inner membrane</keyword>
<keyword id="KW-1003">Cell membrane</keyword>
<keyword id="KW-0472">Membrane</keyword>
<keyword id="KW-0812">Transmembrane</keyword>
<keyword id="KW-1133">Transmembrane helix</keyword>
<keyword id="KW-0813">Transport</keyword>
<feature type="chain" id="PRO_1000087663" description="p-hydroxybenzoic acid efflux pump subunit AaeA">
    <location>
        <begin position="1"/>
        <end position="310"/>
    </location>
</feature>
<feature type="transmembrane region" description="Helical" evidence="1">
    <location>
        <begin position="12"/>
        <end position="32"/>
    </location>
</feature>
<protein>
    <recommendedName>
        <fullName evidence="1">p-hydroxybenzoic acid efflux pump subunit AaeA</fullName>
        <shortName evidence="1">pHBA efflux pump protein A</shortName>
    </recommendedName>
</protein>
<accession>A9N863</accession>
<dbReference type="EMBL" id="CP000886">
    <property type="protein sequence ID" value="ABX69516.1"/>
    <property type="molecule type" value="Genomic_DNA"/>
</dbReference>
<dbReference type="RefSeq" id="WP_000855134.1">
    <property type="nucleotide sequence ID" value="NC_010102.1"/>
</dbReference>
<dbReference type="SMR" id="A9N863"/>
<dbReference type="KEGG" id="spq:SPAB_04193"/>
<dbReference type="PATRIC" id="fig|1016998.12.peg.3948"/>
<dbReference type="HOGENOM" id="CLU_018816_15_2_6"/>
<dbReference type="BioCyc" id="SENT1016998:SPAB_RS17050-MONOMER"/>
<dbReference type="Proteomes" id="UP000008556">
    <property type="component" value="Chromosome"/>
</dbReference>
<dbReference type="GO" id="GO:0005886">
    <property type="term" value="C:plasma membrane"/>
    <property type="evidence" value="ECO:0007669"/>
    <property type="project" value="UniProtKB-SubCell"/>
</dbReference>
<dbReference type="GO" id="GO:0022857">
    <property type="term" value="F:transmembrane transporter activity"/>
    <property type="evidence" value="ECO:0007669"/>
    <property type="project" value="UniProtKB-UniRule"/>
</dbReference>
<dbReference type="FunFam" id="2.40.30.170:FF:000002">
    <property type="entry name" value="p-hydroxybenzoic acid efflux pump subunit AaeA"/>
    <property type="match status" value="1"/>
</dbReference>
<dbReference type="FunFam" id="2.40.50.100:FF:000018">
    <property type="entry name" value="p-hydroxybenzoic acid efflux pump subunit AaeA"/>
    <property type="match status" value="1"/>
</dbReference>
<dbReference type="Gene3D" id="2.40.30.170">
    <property type="match status" value="1"/>
</dbReference>
<dbReference type="Gene3D" id="2.40.50.100">
    <property type="match status" value="1"/>
</dbReference>
<dbReference type="HAMAP" id="MF_01544">
    <property type="entry name" value="AaeA"/>
    <property type="match status" value="1"/>
</dbReference>
<dbReference type="InterPro" id="IPR043602">
    <property type="entry name" value="CusB-like_dom_1"/>
</dbReference>
<dbReference type="InterPro" id="IPR032317">
    <property type="entry name" value="CusB_D23"/>
</dbReference>
<dbReference type="InterPro" id="IPR050393">
    <property type="entry name" value="MFP_Efflux_Pump"/>
</dbReference>
<dbReference type="InterPro" id="IPR022871">
    <property type="entry name" value="PHBA_efflux_pump_AaeA"/>
</dbReference>
<dbReference type="InterPro" id="IPR006143">
    <property type="entry name" value="RND_pump_MFP"/>
</dbReference>
<dbReference type="NCBIfam" id="NF007850">
    <property type="entry name" value="PRK10559.1"/>
    <property type="match status" value="1"/>
</dbReference>
<dbReference type="NCBIfam" id="TIGR01730">
    <property type="entry name" value="RND_mfp"/>
    <property type="match status" value="1"/>
</dbReference>
<dbReference type="PANTHER" id="PTHR30367:SF12">
    <property type="entry name" value="P-HYDROXYBENZOIC ACID EFFLUX PUMP SUBUNIT AAEA"/>
    <property type="match status" value="1"/>
</dbReference>
<dbReference type="PANTHER" id="PTHR30367">
    <property type="entry name" value="P-HYDROXYBENZOIC ACID EFFLUX PUMP SUBUNIT AAEA-RELATED"/>
    <property type="match status" value="1"/>
</dbReference>
<dbReference type="Pfam" id="PF00529">
    <property type="entry name" value="CusB_dom_1"/>
    <property type="match status" value="1"/>
</dbReference>
<dbReference type="Pfam" id="PF16576">
    <property type="entry name" value="HlyD_D23"/>
    <property type="match status" value="1"/>
</dbReference>
<dbReference type="SUPFAM" id="SSF111369">
    <property type="entry name" value="HlyD-like secretion proteins"/>
    <property type="match status" value="1"/>
</dbReference>
<proteinExistence type="inferred from homology"/>
<organism>
    <name type="scientific">Salmonella paratyphi B (strain ATCC BAA-1250 / SPB7)</name>
    <dbReference type="NCBI Taxonomy" id="1016998"/>
    <lineage>
        <taxon>Bacteria</taxon>
        <taxon>Pseudomonadati</taxon>
        <taxon>Pseudomonadota</taxon>
        <taxon>Gammaproteobacteria</taxon>
        <taxon>Enterobacterales</taxon>
        <taxon>Enterobacteriaceae</taxon>
        <taxon>Salmonella</taxon>
    </lineage>
</organism>
<comment type="function">
    <text evidence="1">Forms an efflux pump with AaeB.</text>
</comment>
<comment type="subcellular location">
    <subcellularLocation>
        <location evidence="1">Cell inner membrane</location>
        <topology evidence="1">Single-pass membrane protein</topology>
    </subcellularLocation>
</comment>
<comment type="similarity">
    <text evidence="1">Belongs to the membrane fusion protein (MFP) (TC 8.A.1) family.</text>
</comment>
<name>AAEA_SALPB</name>
<reference key="1">
    <citation type="submission" date="2007-11" db="EMBL/GenBank/DDBJ databases">
        <authorList>
            <consortium name="The Salmonella enterica serovar Paratyphi B Genome Sequencing Project"/>
            <person name="McClelland M."/>
            <person name="Sanderson E.K."/>
            <person name="Porwollik S."/>
            <person name="Spieth J."/>
            <person name="Clifton W.S."/>
            <person name="Fulton R."/>
            <person name="Cordes M."/>
            <person name="Wollam A."/>
            <person name="Shah N."/>
            <person name="Pepin K."/>
            <person name="Bhonagiri V."/>
            <person name="Nash W."/>
            <person name="Johnson M."/>
            <person name="Thiruvilangam P."/>
            <person name="Wilson R."/>
        </authorList>
    </citation>
    <scope>NUCLEOTIDE SEQUENCE [LARGE SCALE GENOMIC DNA]</scope>
    <source>
        <strain>ATCC BAA-1250 / SPB7</strain>
    </source>
</reference>
<sequence>MKTLTRKLSRTAITLVLVILAFIAIFRAWVYYTESPWTRDARFSADVVAIAPDVAGLITHVNVHDNQLVKKDQVLFTIDQPRYQKALAEAEADVAYYQVLAQEKRQEAGRRNRLGVQAMSREEIDQANNVLQTVLHQLAKAQATRDLAKLDLERTVIRAPADGWVTNLNVYAGEFITRGSTAVALVKKNSFYVQAYMEETKLEGVRPGYRAEITPLGSNRVLKGTVDSVAAGVTNASSTSDAKGMATIDSNLEWVRLAQRVPVRIRLDEQQGNLWPAGTTATVVITGKQDRDASQDSFFRKLAHRLREFG</sequence>
<gene>
    <name evidence="1" type="primary">aaeA</name>
    <name type="ordered locus">SPAB_04193</name>
</gene>
<evidence type="ECO:0000255" key="1">
    <source>
        <dbReference type="HAMAP-Rule" id="MF_01544"/>
    </source>
</evidence>